<name>CRGA_MYCLB</name>
<comment type="function">
    <text evidence="1">Involved in cell division.</text>
</comment>
<comment type="subcellular location">
    <subcellularLocation>
        <location evidence="1">Cell membrane</location>
        <topology evidence="1">Multi-pass membrane protein</topology>
    </subcellularLocation>
</comment>
<comment type="similarity">
    <text evidence="1">Belongs to the CrgA family.</text>
</comment>
<organism>
    <name type="scientific">Mycobacterium leprae (strain Br4923)</name>
    <dbReference type="NCBI Taxonomy" id="561304"/>
    <lineage>
        <taxon>Bacteria</taxon>
        <taxon>Bacillati</taxon>
        <taxon>Actinomycetota</taxon>
        <taxon>Actinomycetes</taxon>
        <taxon>Mycobacteriales</taxon>
        <taxon>Mycobacteriaceae</taxon>
        <taxon>Mycobacterium</taxon>
    </lineage>
</organism>
<evidence type="ECO:0000255" key="1">
    <source>
        <dbReference type="HAMAP-Rule" id="MF_00631"/>
    </source>
</evidence>
<sequence>MPKSKVRKKNDFTITSVSRTPVKVKVGPSSVWFVTLFVGLMLIGLVWLMVFQLAALGTQAPTALHWMAQLGPWNYAIAFAFMITGLLLTMRWH</sequence>
<accession>B8ZTP9</accession>
<reference key="1">
    <citation type="journal article" date="2009" name="Nat. Genet.">
        <title>Comparative genomic and phylogeographic analysis of Mycobacterium leprae.</title>
        <authorList>
            <person name="Monot M."/>
            <person name="Honore N."/>
            <person name="Garnier T."/>
            <person name="Zidane N."/>
            <person name="Sherafi D."/>
            <person name="Paniz-Mondolfi A."/>
            <person name="Matsuoka M."/>
            <person name="Taylor G.M."/>
            <person name="Donoghue H.D."/>
            <person name="Bouwman A."/>
            <person name="Mays S."/>
            <person name="Watson C."/>
            <person name="Lockwood D."/>
            <person name="Khamispour A."/>
            <person name="Dowlati Y."/>
            <person name="Jianping S."/>
            <person name="Rea T.H."/>
            <person name="Vera-Cabrera L."/>
            <person name="Stefani M.M."/>
            <person name="Banu S."/>
            <person name="Macdonald M."/>
            <person name="Sapkota B.R."/>
            <person name="Spencer J.S."/>
            <person name="Thomas J."/>
            <person name="Harshman K."/>
            <person name="Singh P."/>
            <person name="Busso P."/>
            <person name="Gattiker A."/>
            <person name="Rougemont J."/>
            <person name="Brennan P.J."/>
            <person name="Cole S.T."/>
        </authorList>
    </citation>
    <scope>NUCLEOTIDE SEQUENCE [LARGE SCALE GENOMIC DNA]</scope>
    <source>
        <strain>Br4923</strain>
    </source>
</reference>
<feature type="chain" id="PRO_1000147276" description="Cell division protein CrgA">
    <location>
        <begin position="1"/>
        <end position="93"/>
    </location>
</feature>
<feature type="transmembrane region" description="Helical" evidence="1">
    <location>
        <begin position="31"/>
        <end position="51"/>
    </location>
</feature>
<feature type="transmembrane region" description="Helical" evidence="1">
    <location>
        <begin position="70"/>
        <end position="90"/>
    </location>
</feature>
<dbReference type="EMBL" id="FM211192">
    <property type="protein sequence ID" value="CAR70106.1"/>
    <property type="molecule type" value="Genomic_DNA"/>
</dbReference>
<dbReference type="SMR" id="B8ZTP9"/>
<dbReference type="KEGG" id="mlb:MLBr00013"/>
<dbReference type="HOGENOM" id="CLU_149126_2_0_11"/>
<dbReference type="Proteomes" id="UP000006900">
    <property type="component" value="Chromosome"/>
</dbReference>
<dbReference type="GO" id="GO:0005886">
    <property type="term" value="C:plasma membrane"/>
    <property type="evidence" value="ECO:0007669"/>
    <property type="project" value="UniProtKB-SubCell"/>
</dbReference>
<dbReference type="GO" id="GO:0051301">
    <property type="term" value="P:cell division"/>
    <property type="evidence" value="ECO:0007669"/>
    <property type="project" value="UniProtKB-UniRule"/>
</dbReference>
<dbReference type="HAMAP" id="MF_00631">
    <property type="entry name" value="CrgA"/>
    <property type="match status" value="1"/>
</dbReference>
<dbReference type="InterPro" id="IPR009619">
    <property type="entry name" value="CrgA"/>
</dbReference>
<dbReference type="NCBIfam" id="NF001194">
    <property type="entry name" value="PRK00159.1"/>
    <property type="match status" value="1"/>
</dbReference>
<dbReference type="Pfam" id="PF06781">
    <property type="entry name" value="CrgA"/>
    <property type="match status" value="1"/>
</dbReference>
<proteinExistence type="inferred from homology"/>
<gene>
    <name evidence="1" type="primary">crgA</name>
    <name type="ordered locus">MLBr00013</name>
</gene>
<protein>
    <recommendedName>
        <fullName evidence="1">Cell division protein CrgA</fullName>
    </recommendedName>
</protein>
<keyword id="KW-0131">Cell cycle</keyword>
<keyword id="KW-0132">Cell division</keyword>
<keyword id="KW-1003">Cell membrane</keyword>
<keyword id="KW-0472">Membrane</keyword>
<keyword id="KW-0812">Transmembrane</keyword>
<keyword id="KW-1133">Transmembrane helix</keyword>